<name>FABH_BORPD</name>
<protein>
    <recommendedName>
        <fullName evidence="1">Beta-ketoacyl-[acyl-carrier-protein] synthase III</fullName>
        <shortName evidence="1">Beta-ketoacyl-ACP synthase III</shortName>
        <shortName evidence="1">KAS III</shortName>
        <ecNumber evidence="1">2.3.1.180</ecNumber>
    </recommendedName>
    <alternativeName>
        <fullName evidence="1">3-oxoacyl-[acyl-carrier-protein] synthase 3</fullName>
    </alternativeName>
    <alternativeName>
        <fullName evidence="1">3-oxoacyl-[acyl-carrier-protein] synthase III</fullName>
    </alternativeName>
</protein>
<sequence length="328" mass="34320">MGTAMTYAVIAGSGSFLPERVVSNDELAAELATRNISTSDEWIVERTGIRQRHLAERGVTTSFLATEAARRALADAGVSAAEVDLIIVATSTPDYVFPSTACLVQANLGAKGGAAFDVQAVCSGFVYALSTADAFVRAGRARCALVIGAEVFSRILDWNDRSTCVLFGDGAGAVVLKAGSKPGILAAQLHADGSQTKILCAAGNVAYGDVTGDPFLRMDGQAVFKQAVTVLDRSARDVCAEAGVELAELDWLVPHQANVRILNFLARKLQVPTEKVVITVDSHANTSAASVPLALDAARRDGRIKPGQLVLMQGVGGGFTWGSVLARM</sequence>
<gene>
    <name evidence="1" type="primary">fabH</name>
    <name type="ordered locus">Bpet1753</name>
</gene>
<proteinExistence type="inferred from homology"/>
<feature type="chain" id="PRO_1000187845" description="Beta-ketoacyl-[acyl-carrier-protein] synthase III">
    <location>
        <begin position="1"/>
        <end position="328"/>
    </location>
</feature>
<feature type="region of interest" description="ACP-binding" evidence="1">
    <location>
        <begin position="256"/>
        <end position="260"/>
    </location>
</feature>
<feature type="active site" evidence="1">
    <location>
        <position position="122"/>
    </location>
</feature>
<feature type="active site" evidence="1">
    <location>
        <position position="255"/>
    </location>
</feature>
<feature type="active site" evidence="1">
    <location>
        <position position="285"/>
    </location>
</feature>
<keyword id="KW-0012">Acyltransferase</keyword>
<keyword id="KW-0963">Cytoplasm</keyword>
<keyword id="KW-0275">Fatty acid biosynthesis</keyword>
<keyword id="KW-0276">Fatty acid metabolism</keyword>
<keyword id="KW-0444">Lipid biosynthesis</keyword>
<keyword id="KW-0443">Lipid metabolism</keyword>
<keyword id="KW-0511">Multifunctional enzyme</keyword>
<keyword id="KW-0808">Transferase</keyword>
<organism>
    <name type="scientific">Bordetella petrii (strain ATCC BAA-461 / DSM 12804 / CCUG 43448)</name>
    <dbReference type="NCBI Taxonomy" id="340100"/>
    <lineage>
        <taxon>Bacteria</taxon>
        <taxon>Pseudomonadati</taxon>
        <taxon>Pseudomonadota</taxon>
        <taxon>Betaproteobacteria</taxon>
        <taxon>Burkholderiales</taxon>
        <taxon>Alcaligenaceae</taxon>
        <taxon>Bordetella</taxon>
    </lineage>
</organism>
<dbReference type="EC" id="2.3.1.180" evidence="1"/>
<dbReference type="EMBL" id="AM902716">
    <property type="protein sequence ID" value="CAP42092.1"/>
    <property type="molecule type" value="Genomic_DNA"/>
</dbReference>
<dbReference type="SMR" id="A9IIH4"/>
<dbReference type="STRING" id="94624.Bpet1753"/>
<dbReference type="KEGG" id="bpt:Bpet1753"/>
<dbReference type="eggNOG" id="COG0332">
    <property type="taxonomic scope" value="Bacteria"/>
</dbReference>
<dbReference type="UniPathway" id="UPA00094"/>
<dbReference type="Proteomes" id="UP000001225">
    <property type="component" value="Chromosome"/>
</dbReference>
<dbReference type="GO" id="GO:0005737">
    <property type="term" value="C:cytoplasm"/>
    <property type="evidence" value="ECO:0007669"/>
    <property type="project" value="UniProtKB-SubCell"/>
</dbReference>
<dbReference type="GO" id="GO:0004315">
    <property type="term" value="F:3-oxoacyl-[acyl-carrier-protein] synthase activity"/>
    <property type="evidence" value="ECO:0007669"/>
    <property type="project" value="InterPro"/>
</dbReference>
<dbReference type="GO" id="GO:0033818">
    <property type="term" value="F:beta-ketoacyl-acyl-carrier-protein synthase III activity"/>
    <property type="evidence" value="ECO:0007669"/>
    <property type="project" value="UniProtKB-UniRule"/>
</dbReference>
<dbReference type="GO" id="GO:0006633">
    <property type="term" value="P:fatty acid biosynthetic process"/>
    <property type="evidence" value="ECO:0007669"/>
    <property type="project" value="UniProtKB-UniRule"/>
</dbReference>
<dbReference type="GO" id="GO:0044550">
    <property type="term" value="P:secondary metabolite biosynthetic process"/>
    <property type="evidence" value="ECO:0007669"/>
    <property type="project" value="TreeGrafter"/>
</dbReference>
<dbReference type="CDD" id="cd00830">
    <property type="entry name" value="KAS_III"/>
    <property type="match status" value="1"/>
</dbReference>
<dbReference type="FunFam" id="3.40.47.10:FF:000004">
    <property type="entry name" value="3-oxoacyl-[acyl-carrier-protein] synthase 3"/>
    <property type="match status" value="1"/>
</dbReference>
<dbReference type="Gene3D" id="3.40.47.10">
    <property type="match status" value="1"/>
</dbReference>
<dbReference type="HAMAP" id="MF_01815">
    <property type="entry name" value="FabH"/>
    <property type="match status" value="1"/>
</dbReference>
<dbReference type="InterPro" id="IPR013747">
    <property type="entry name" value="ACP_syn_III_C"/>
</dbReference>
<dbReference type="InterPro" id="IPR013751">
    <property type="entry name" value="ACP_syn_III_N"/>
</dbReference>
<dbReference type="InterPro" id="IPR004655">
    <property type="entry name" value="FabH"/>
</dbReference>
<dbReference type="InterPro" id="IPR016039">
    <property type="entry name" value="Thiolase-like"/>
</dbReference>
<dbReference type="NCBIfam" id="TIGR00747">
    <property type="entry name" value="fabH"/>
    <property type="match status" value="1"/>
</dbReference>
<dbReference type="NCBIfam" id="NF006829">
    <property type="entry name" value="PRK09352.1"/>
    <property type="match status" value="1"/>
</dbReference>
<dbReference type="PANTHER" id="PTHR34069">
    <property type="entry name" value="3-OXOACYL-[ACYL-CARRIER-PROTEIN] SYNTHASE 3"/>
    <property type="match status" value="1"/>
</dbReference>
<dbReference type="PANTHER" id="PTHR34069:SF2">
    <property type="entry name" value="BETA-KETOACYL-[ACYL-CARRIER-PROTEIN] SYNTHASE III"/>
    <property type="match status" value="1"/>
</dbReference>
<dbReference type="Pfam" id="PF08545">
    <property type="entry name" value="ACP_syn_III"/>
    <property type="match status" value="1"/>
</dbReference>
<dbReference type="Pfam" id="PF08541">
    <property type="entry name" value="ACP_syn_III_C"/>
    <property type="match status" value="1"/>
</dbReference>
<dbReference type="SUPFAM" id="SSF53901">
    <property type="entry name" value="Thiolase-like"/>
    <property type="match status" value="1"/>
</dbReference>
<evidence type="ECO:0000255" key="1">
    <source>
        <dbReference type="HAMAP-Rule" id="MF_01815"/>
    </source>
</evidence>
<reference key="1">
    <citation type="journal article" date="2008" name="BMC Genomics">
        <title>The missing link: Bordetella petrii is endowed with both the metabolic versatility of environmental bacteria and virulence traits of pathogenic Bordetellae.</title>
        <authorList>
            <person name="Gross R."/>
            <person name="Guzman C.A."/>
            <person name="Sebaihia M."/>
            <person name="Martin dos Santos V.A.P."/>
            <person name="Pieper D.H."/>
            <person name="Koebnik R."/>
            <person name="Lechner M."/>
            <person name="Bartels D."/>
            <person name="Buhrmester J."/>
            <person name="Choudhuri J.V."/>
            <person name="Ebensen T."/>
            <person name="Gaigalat L."/>
            <person name="Herrmann S."/>
            <person name="Khachane A.N."/>
            <person name="Larisch C."/>
            <person name="Link S."/>
            <person name="Linke B."/>
            <person name="Meyer F."/>
            <person name="Mormann S."/>
            <person name="Nakunst D."/>
            <person name="Rueckert C."/>
            <person name="Schneiker-Bekel S."/>
            <person name="Schulze K."/>
            <person name="Voerholter F.-J."/>
            <person name="Yevsa T."/>
            <person name="Engle J.T."/>
            <person name="Goldman W.E."/>
            <person name="Puehler A."/>
            <person name="Goebel U.B."/>
            <person name="Goesmann A."/>
            <person name="Bloecker H."/>
            <person name="Kaiser O."/>
            <person name="Martinez-Arias R."/>
        </authorList>
    </citation>
    <scope>NUCLEOTIDE SEQUENCE [LARGE SCALE GENOMIC DNA]</scope>
    <source>
        <strain>ATCC BAA-461 / DSM 12804 / CCUG 43448</strain>
    </source>
</reference>
<accession>A9IIH4</accession>
<comment type="function">
    <text evidence="1">Catalyzes the condensation reaction of fatty acid synthesis by the addition to an acyl acceptor of two carbons from malonyl-ACP. Catalyzes the first condensation reaction which initiates fatty acid synthesis and may therefore play a role in governing the total rate of fatty acid production. Possesses both acetoacetyl-ACP synthase and acetyl transacylase activities. Its substrate specificity determines the biosynthesis of branched-chain and/or straight-chain of fatty acids.</text>
</comment>
<comment type="catalytic activity">
    <reaction evidence="1">
        <text>malonyl-[ACP] + acetyl-CoA + H(+) = 3-oxobutanoyl-[ACP] + CO2 + CoA</text>
        <dbReference type="Rhea" id="RHEA:12080"/>
        <dbReference type="Rhea" id="RHEA-COMP:9623"/>
        <dbReference type="Rhea" id="RHEA-COMP:9625"/>
        <dbReference type="ChEBI" id="CHEBI:15378"/>
        <dbReference type="ChEBI" id="CHEBI:16526"/>
        <dbReference type="ChEBI" id="CHEBI:57287"/>
        <dbReference type="ChEBI" id="CHEBI:57288"/>
        <dbReference type="ChEBI" id="CHEBI:78449"/>
        <dbReference type="ChEBI" id="CHEBI:78450"/>
        <dbReference type="EC" id="2.3.1.180"/>
    </reaction>
</comment>
<comment type="pathway">
    <text evidence="1">Lipid metabolism; fatty acid biosynthesis.</text>
</comment>
<comment type="subunit">
    <text evidence="1">Homodimer.</text>
</comment>
<comment type="subcellular location">
    <subcellularLocation>
        <location evidence="1">Cytoplasm</location>
    </subcellularLocation>
</comment>
<comment type="domain">
    <text evidence="1">The last Arg residue of the ACP-binding site is essential for the weak association between ACP/AcpP and FabH.</text>
</comment>
<comment type="similarity">
    <text evidence="1">Belongs to the thiolase-like superfamily. FabH family.</text>
</comment>